<evidence type="ECO:0000255" key="1">
    <source>
        <dbReference type="HAMAP-Rule" id="MF_04065"/>
    </source>
</evidence>
<evidence type="ECO:0000256" key="2">
    <source>
        <dbReference type="SAM" id="MobiDB-lite"/>
    </source>
</evidence>
<accession>P16506</accession>
<proteinExistence type="inferred from homology"/>
<sequence length="757" mass="86368">MDVNPTLLFLKVPAQNAISTTFPYTGDPPYSHGTGTGYTMDTVNRTHQYSEKGKWTTNTETGAPQLNPIDGPLPEDNEPSGYAQTDCVLEAMAFLEESHPGIFENSCLETMEVIQQTRVDKLTQGRQTYDWTLNRNQPAATALANTIEVFRSNGLTANESGRLIDFLKDVIESMDKEEMEITTHFQRKRRVRDNMTKKMVTQRTIGKKKQRLNKRSYLIRALTLNTMTKDAERGKLKRRAIATPGMQIRGFVHFVETLARNICEKLEQSGLPVGGNEKKAKLANVVRKMMTNSQDTELSFTITGDNTKWNENQNPRVFLAMITYITRNQPEWFRNVLSIAPIMFSNKMARLGKGYMFESKSMKLRTQIPAEMLASIDLKYFNESTRKKIEKIRPLLIDGTVSLSPGMMMGMFNMLSTVLGVSILNLGQKKYTKTTYWWDGLQSSDDFALIVNAPNHEGIQAGVNRFYRTCKLVGINMSKKKSYINRTGTFEFTSFFYRYGFVANFSMELPSFGVSGINESADMSIGVTVIKNNMINNDLGPATAQMALQLFIKDYRYTYRCHRGDTQIQTRRSFELKKLWEQTRSKAGLLVSDGGSNLYNIRNLHIPEVCLKWELMDEDYQGRLCNPLNPFVSHKEIESVNNAVVMPAHGPAKSMEYDAVATTHSWTPKRNRSILNTSQRGILEDEQMYQKCCNLFEKFFPSSSYRRPVGISSMVEAMVSRARIDARIDFESGRIKKEEFAEIMKICSTIEELRRQK</sequence>
<organism>
    <name type="scientific">Influenza A virus (strain A/Korea/426/1968 H2N2)</name>
    <dbReference type="NCBI Taxonomy" id="488241"/>
    <lineage>
        <taxon>Viruses</taxon>
        <taxon>Riboviria</taxon>
        <taxon>Orthornavirae</taxon>
        <taxon>Negarnaviricota</taxon>
        <taxon>Polyploviricotina</taxon>
        <taxon>Insthoviricetes</taxon>
        <taxon>Articulavirales</taxon>
        <taxon>Orthomyxoviridae</taxon>
        <taxon>Alphainfluenzavirus</taxon>
        <taxon>Alphainfluenzavirus influenzae</taxon>
        <taxon>Influenza A virus</taxon>
    </lineage>
</organism>
<dbReference type="EC" id="2.7.7.48" evidence="1"/>
<dbReference type="EMBL" id="M25935">
    <property type="protein sequence ID" value="AAA43644.1"/>
    <property type="molecule type" value="Genomic_RNA"/>
</dbReference>
<dbReference type="RefSeq" id="YP_308851.1">
    <property type="nucleotide sequence ID" value="NC_007375.1"/>
</dbReference>
<dbReference type="SMR" id="P16506"/>
<dbReference type="GeneID" id="3655105"/>
<dbReference type="KEGG" id="vg:3655105"/>
<dbReference type="OrthoDB" id="2346at10239"/>
<dbReference type="Proteomes" id="UP000200640">
    <property type="component" value="Genome"/>
</dbReference>
<dbReference type="GO" id="GO:0030430">
    <property type="term" value="C:host cell cytoplasm"/>
    <property type="evidence" value="ECO:0007669"/>
    <property type="project" value="UniProtKB-SubCell"/>
</dbReference>
<dbReference type="GO" id="GO:0042025">
    <property type="term" value="C:host cell nucleus"/>
    <property type="evidence" value="ECO:0007669"/>
    <property type="project" value="UniProtKB-SubCell"/>
</dbReference>
<dbReference type="GO" id="GO:0000166">
    <property type="term" value="F:nucleotide binding"/>
    <property type="evidence" value="ECO:0007669"/>
    <property type="project" value="UniProtKB-UniRule"/>
</dbReference>
<dbReference type="GO" id="GO:0003723">
    <property type="term" value="F:RNA binding"/>
    <property type="evidence" value="ECO:0007669"/>
    <property type="project" value="InterPro"/>
</dbReference>
<dbReference type="GO" id="GO:0003968">
    <property type="term" value="F:RNA-directed RNA polymerase activity"/>
    <property type="evidence" value="ECO:0007669"/>
    <property type="project" value="UniProtKB-UniRule"/>
</dbReference>
<dbReference type="GO" id="GO:0006351">
    <property type="term" value="P:DNA-templated transcription"/>
    <property type="evidence" value="ECO:0007669"/>
    <property type="project" value="UniProtKB-UniRule"/>
</dbReference>
<dbReference type="GO" id="GO:0039657">
    <property type="term" value="P:symbiont-mediated suppression of host gene expression"/>
    <property type="evidence" value="ECO:0007669"/>
    <property type="project" value="UniProtKB-KW"/>
</dbReference>
<dbReference type="GO" id="GO:0039523">
    <property type="term" value="P:symbiont-mediated suppression of host mRNA transcription via inhibition of RNA polymerase II activity"/>
    <property type="evidence" value="ECO:0007669"/>
    <property type="project" value="UniProtKB-UniRule"/>
</dbReference>
<dbReference type="GO" id="GO:0039694">
    <property type="term" value="P:viral RNA genome replication"/>
    <property type="evidence" value="ECO:0007669"/>
    <property type="project" value="UniProtKB-UniRule"/>
</dbReference>
<dbReference type="GO" id="GO:0019083">
    <property type="term" value="P:viral transcription"/>
    <property type="evidence" value="ECO:0007669"/>
    <property type="project" value="UniProtKB-KW"/>
</dbReference>
<dbReference type="Gene3D" id="6.10.140.720">
    <property type="match status" value="1"/>
</dbReference>
<dbReference type="HAMAP" id="MF_04065">
    <property type="entry name" value="INFV_RDRP"/>
    <property type="match status" value="1"/>
</dbReference>
<dbReference type="InterPro" id="IPR007099">
    <property type="entry name" value="RNA-dir_pol_NSvirus"/>
</dbReference>
<dbReference type="InterPro" id="IPR001407">
    <property type="entry name" value="RNA_pol_PB1_influenza"/>
</dbReference>
<dbReference type="Pfam" id="PF00602">
    <property type="entry name" value="Flu_PB1"/>
    <property type="match status" value="1"/>
</dbReference>
<dbReference type="PIRSF" id="PIRSF000827">
    <property type="entry name" value="RdRPol_OMV"/>
    <property type="match status" value="1"/>
</dbReference>
<dbReference type="PROSITE" id="PS50525">
    <property type="entry name" value="RDRP_SSRNA_NEG_SEG"/>
    <property type="match status" value="1"/>
</dbReference>
<organismHost>
    <name type="scientific">Aves</name>
    <dbReference type="NCBI Taxonomy" id="8782"/>
</organismHost>
<organismHost>
    <name type="scientific">Homo sapiens</name>
    <name type="common">Human</name>
    <dbReference type="NCBI Taxonomy" id="9606"/>
</organismHost>
<name>RDRP_I68A5</name>
<keyword id="KW-1262">Eukaryotic host gene expression shutoff by virus</keyword>
<keyword id="KW-1191">Eukaryotic host transcription shutoff by virus</keyword>
<keyword id="KW-1035">Host cytoplasm</keyword>
<keyword id="KW-1190">Host gene expression shutoff by virus</keyword>
<keyword id="KW-1048">Host nucleus</keyword>
<keyword id="KW-0945">Host-virus interaction</keyword>
<keyword id="KW-1104">Inhibition of host RNA polymerase II by virus</keyword>
<keyword id="KW-0547">Nucleotide-binding</keyword>
<keyword id="KW-0548">Nucleotidyltransferase</keyword>
<keyword id="KW-0597">Phosphoprotein</keyword>
<keyword id="KW-0696">RNA-directed RNA polymerase</keyword>
<keyword id="KW-0808">Transferase</keyword>
<keyword id="KW-0693">Viral RNA replication</keyword>
<keyword id="KW-1195">Viral transcription</keyword>
<comment type="function">
    <text evidence="1">RNA-dependent RNA polymerase which is responsible for replication and transcription of virus RNA segments. The transcription of viral mRNAs occurs by a unique mechanism called cap-snatching. 5' methylated caps of cellular mRNAs are cleaved after 10-13 nucleotides by PA. In turn, these short capped RNAs are used as primers by PB1 for transcription of viral mRNAs. During virus replication, PB1 initiates RNA synthesis and copy vRNA into complementary RNA (cRNA) which in turn serves as a template for the production of more vRNAs.</text>
</comment>
<comment type="catalytic activity">
    <reaction evidence="1">
        <text>RNA(n) + a ribonucleoside 5'-triphosphate = RNA(n+1) + diphosphate</text>
        <dbReference type="Rhea" id="RHEA:21248"/>
        <dbReference type="Rhea" id="RHEA-COMP:14527"/>
        <dbReference type="Rhea" id="RHEA-COMP:17342"/>
        <dbReference type="ChEBI" id="CHEBI:33019"/>
        <dbReference type="ChEBI" id="CHEBI:61557"/>
        <dbReference type="ChEBI" id="CHEBI:140395"/>
        <dbReference type="EC" id="2.7.7.48"/>
    </reaction>
</comment>
<comment type="subunit">
    <text evidence="1">Influenza RNA polymerase is composed of three subunits: PB1, PB2 and PA. Interacts (via N-terminus) with PA (via C-terminus). Interacts (via C-terminus) with PB2 (via N-terminus); this interaction is essential for transcription initiation.</text>
</comment>
<comment type="subcellular location">
    <subcellularLocation>
        <location evidence="1">Host nucleus</location>
    </subcellularLocation>
    <subcellularLocation>
        <location evidence="1">Host cytoplasm</location>
    </subcellularLocation>
</comment>
<comment type="PTM">
    <text evidence="1">Phosphorylated by host PRKCA.</text>
</comment>
<comment type="similarity">
    <text evidence="1">Belongs to the influenza viruses polymerase PB1 family.</text>
</comment>
<gene>
    <name evidence="1" type="primary">PB1</name>
</gene>
<protein>
    <recommendedName>
        <fullName evidence="1">RNA-directed RNA polymerase catalytic subunit</fullName>
        <ecNumber evidence="1">2.7.7.48</ecNumber>
    </recommendedName>
    <alternativeName>
        <fullName evidence="1">Polymerase basic protein 1</fullName>
        <shortName evidence="1">PB1</shortName>
    </alternativeName>
    <alternativeName>
        <fullName evidence="1">RNA-directed RNA polymerase subunit P1</fullName>
    </alternativeName>
</protein>
<feature type="chain" id="PRO_0000078756" description="RNA-directed RNA polymerase catalytic subunit">
    <location>
        <begin position="1"/>
        <end position="757"/>
    </location>
</feature>
<feature type="domain" description="RdRp catalytic" evidence="1">
    <location>
        <begin position="286"/>
        <end position="483"/>
    </location>
</feature>
<feature type="region of interest" description="Disordered" evidence="2">
    <location>
        <begin position="50"/>
        <end position="82"/>
    </location>
</feature>
<feature type="region of interest" description="Promoter-binding site" evidence="1">
    <location>
        <begin position="249"/>
        <end position="256"/>
    </location>
</feature>
<feature type="short sequence motif" description="Nuclear localization signal" evidence="1">
    <location>
        <begin position="187"/>
        <end position="195"/>
    </location>
</feature>
<feature type="short sequence motif" description="Nuclear localization signal" evidence="1">
    <location>
        <begin position="203"/>
        <end position="216"/>
    </location>
</feature>
<feature type="compositionally biased region" description="Polar residues" evidence="2">
    <location>
        <begin position="55"/>
        <end position="64"/>
    </location>
</feature>
<reference key="1">
    <citation type="journal article" date="1989" name="J. Virol.">
        <title>Avian-to-human transmission of the PB1 gene of influenza A viruses in the 1957 and 1968 pandemics.</title>
        <authorList>
            <person name="Kawaoka Y."/>
            <person name="Krauss S."/>
            <person name="Webster R.G."/>
        </authorList>
    </citation>
    <scope>NUCLEOTIDE SEQUENCE [GENOMIC RNA]</scope>
</reference>